<accession>Q19863</accession>
<sequence length="486" mass="55618">MSYYPYYQTENSDYSSFNSLMADICEPSPSSSSSRKRPADSENGNSAKMPVVIPMQPVQNFTMQYPIDNGWQNFNMIHQVYNNNNMNQPGYGWVGQPPPMPQDFYKARPGQTVTPPMNEFHNAHGTQQTPNDNSGNLPISSVMYTPESDLSTTSANFTPDWNTTTNGPCNQEKRNKENLFPNDDTSSGKLFDYFLTNTERENESENNIPHPYNKAVFPTFGVPVSSDGNVVAEVVDGRLPAVGTRSKYDLTVDELRRRCGAPEHMNQSALYCFFRKSKKKEAINRVKKVLTDYNITVRTMQRQRKVTCFSPFLEEEATALARDLDSITEEFLPIDAIALEMLEKLIFNNKNLDICLRILKNTNKTITRVIKTLEVRQPKITGQKEKLKGNSLDLSYHNFSLTTHGFGHPNSLSHYRSYQKIVEQAALYCEKMQKGASLPSKEYLIPGQKPFENMSNEFFVEWRMRSYHKKARKEMLDFNQAYSRSS</sequence>
<organism evidence="7">
    <name type="scientific">Caenorhabditis elegans</name>
    <dbReference type="NCBI Taxonomy" id="6239"/>
    <lineage>
        <taxon>Eukaryota</taxon>
        <taxon>Metazoa</taxon>
        <taxon>Ecdysozoa</taxon>
        <taxon>Nematoda</taxon>
        <taxon>Chromadorea</taxon>
        <taxon>Rhabditida</taxon>
        <taxon>Rhabditina</taxon>
        <taxon>Rhabditomorpha</taxon>
        <taxon>Rhabditoidea</taxon>
        <taxon>Rhabditidae</taxon>
        <taxon>Peloderinae</taxon>
        <taxon>Caenorhabditis</taxon>
    </lineage>
</organism>
<gene>
    <name evidence="8" type="primary">aptf-4</name>
    <name evidence="8" type="ORF">F28C6.1</name>
</gene>
<keyword id="KW-0217">Developmental protein</keyword>
<keyword id="KW-0238">DNA-binding</keyword>
<keyword id="KW-0539">Nucleus</keyword>
<keyword id="KW-1185">Reference proteome</keyword>
<keyword id="KW-0804">Transcription</keyword>
<keyword id="KW-0805">Transcription regulation</keyword>
<feature type="chain" id="PRO_0000453376" description="Transcription factor aptf-4">
    <location>
        <begin position="1"/>
        <end position="486"/>
    </location>
</feature>
<feature type="region of interest" description="Disordered" evidence="2">
    <location>
        <begin position="25"/>
        <end position="49"/>
    </location>
</feature>
<feature type="region of interest" description="Disordered" evidence="2">
    <location>
        <begin position="150"/>
        <end position="173"/>
    </location>
</feature>
<feature type="region of interest" description="H-S-H (helix-span-helix), dimerization" evidence="1">
    <location>
        <begin position="301"/>
        <end position="430"/>
    </location>
</feature>
<feature type="compositionally biased region" description="Polar residues" evidence="2">
    <location>
        <begin position="150"/>
        <end position="169"/>
    </location>
</feature>
<proteinExistence type="inferred from homology"/>
<comment type="function">
    <text evidence="1 3">Sequence-specific DNA-binding protein that interacts with enhancer elements to regulate transcription of selected genes (By similarity). Required for neuroblast and epidermal morphogenesis, perhaps acting in cooperation with transcription factor aptf-2 (PubMed:27176626).</text>
</comment>
<comment type="subunit">
    <text evidence="1">Binds DNA as a dimer.</text>
</comment>
<comment type="subcellular location">
    <subcellularLocation>
        <location evidence="6">Nucleus</location>
    </subcellularLocation>
</comment>
<comment type="disruption phenotype">
    <text evidence="3">RNAi-mediated knockdown causes embryonic lethality and morphological defects in larva (PubMed:27176626). Embryonic lethality is exacerbated on the transcription factor aptf-2 mutant background (PubMed:27176626).</text>
</comment>
<comment type="similarity">
    <text evidence="4">Belongs to the AP-2 family.</text>
</comment>
<reference evidence="7" key="1">
    <citation type="journal article" date="1998" name="Science">
        <title>Genome sequence of the nematode C. elegans: a platform for investigating biology.</title>
        <authorList>
            <consortium name="The C. elegans sequencing consortium"/>
        </authorList>
    </citation>
    <scope>NUCLEOTIDE SEQUENCE [LARGE SCALE GENOMIC DNA]</scope>
    <source>
        <strain evidence="7">Bristol N2</strain>
    </source>
</reference>
<reference evidence="5" key="2">
    <citation type="journal article" date="2016" name="PLoS Genet.">
        <title>The AP-2 Transcription Factor APTF-2 Is Required for Neuroblast and Epidermal Morphogenesis in Caenorhabditis elegans Embryogenesis.</title>
        <authorList>
            <person name="Budirahardja Y."/>
            <person name="Tan P.Y."/>
            <person name="Doan T."/>
            <person name="Weisdepp P."/>
            <person name="Zaidel-Bar R."/>
        </authorList>
    </citation>
    <scope>FUNCTION</scope>
    <scope>SUBCELLULAR LOCATION</scope>
    <scope>DISRUPTION PHENOTYPE</scope>
</reference>
<dbReference type="EMBL" id="BX284602">
    <property type="protein sequence ID" value="CAA92669.1"/>
    <property type="molecule type" value="Genomic_DNA"/>
</dbReference>
<dbReference type="PIR" id="T21481">
    <property type="entry name" value="T21481"/>
</dbReference>
<dbReference type="RefSeq" id="NP_495818.1">
    <property type="nucleotide sequence ID" value="NM_063417.8"/>
</dbReference>
<dbReference type="SMR" id="Q19863"/>
<dbReference type="FunCoup" id="Q19863">
    <property type="interactions" value="362"/>
</dbReference>
<dbReference type="IntAct" id="Q19863">
    <property type="interactions" value="4"/>
</dbReference>
<dbReference type="STRING" id="6239.F28C6.1.1"/>
<dbReference type="PaxDb" id="6239-F28C6.1"/>
<dbReference type="EnsemblMetazoa" id="F28C6.1.1">
    <property type="protein sequence ID" value="F28C6.1.1"/>
    <property type="gene ID" value="WBGene00009202"/>
</dbReference>
<dbReference type="GeneID" id="174376"/>
<dbReference type="KEGG" id="cel:CELE_F28C6.1"/>
<dbReference type="UCSC" id="F28C6.1">
    <property type="organism name" value="c. elegans"/>
</dbReference>
<dbReference type="AGR" id="WB:WBGene00009202"/>
<dbReference type="CTD" id="174376"/>
<dbReference type="WormBase" id="F28C6.1">
    <property type="protein sequence ID" value="CE03272"/>
    <property type="gene ID" value="WBGene00009202"/>
    <property type="gene designation" value="aptf-4"/>
</dbReference>
<dbReference type="eggNOG" id="KOG3811">
    <property type="taxonomic scope" value="Eukaryota"/>
</dbReference>
<dbReference type="GeneTree" id="ENSGT00950000182848"/>
<dbReference type="HOGENOM" id="CLU_561689_0_0_1"/>
<dbReference type="InParanoid" id="Q19863"/>
<dbReference type="OMA" id="LMADICE"/>
<dbReference type="OrthoDB" id="5876408at2759"/>
<dbReference type="PhylomeDB" id="Q19863"/>
<dbReference type="Reactome" id="R-CEL-3232118">
    <property type="pathway name" value="SUMOylation of transcription factors"/>
</dbReference>
<dbReference type="Reactome" id="R-CEL-8866904">
    <property type="pathway name" value="Negative regulation of activity of TFAP2 (AP-2) family transcription factors"/>
</dbReference>
<dbReference type="Reactome" id="R-CEL-8866907">
    <property type="pathway name" value="Activation of the TFAP2 (AP-2) family of transcription factors"/>
</dbReference>
<dbReference type="Reactome" id="R-CEL-9834899">
    <property type="pathway name" value="Specification of the neural plate border"/>
</dbReference>
<dbReference type="PRO" id="PR:Q19863"/>
<dbReference type="Proteomes" id="UP000001940">
    <property type="component" value="Chromosome II"/>
</dbReference>
<dbReference type="Bgee" id="WBGene00009202">
    <property type="expression patterns" value="Expressed in embryo and 3 other cell types or tissues"/>
</dbReference>
<dbReference type="GO" id="GO:0005634">
    <property type="term" value="C:nucleus"/>
    <property type="evidence" value="ECO:0000250"/>
    <property type="project" value="WormBase"/>
</dbReference>
<dbReference type="GO" id="GO:0001228">
    <property type="term" value="F:DNA-binding transcription activator activity, RNA polymerase II-specific"/>
    <property type="evidence" value="ECO:0000250"/>
    <property type="project" value="WormBase"/>
</dbReference>
<dbReference type="GO" id="GO:0000977">
    <property type="term" value="F:RNA polymerase II transcription regulatory region sequence-specific DNA binding"/>
    <property type="evidence" value="ECO:0000318"/>
    <property type="project" value="GO_Central"/>
</dbReference>
<dbReference type="GO" id="GO:0043565">
    <property type="term" value="F:sequence-specific DNA binding"/>
    <property type="evidence" value="ECO:0000250"/>
    <property type="project" value="WormBase"/>
</dbReference>
<dbReference type="GO" id="GO:0045944">
    <property type="term" value="P:positive regulation of transcription by RNA polymerase II"/>
    <property type="evidence" value="ECO:0000250"/>
    <property type="project" value="WormBase"/>
</dbReference>
<dbReference type="GO" id="GO:0042127">
    <property type="term" value="P:regulation of cell population proliferation"/>
    <property type="evidence" value="ECO:0000318"/>
    <property type="project" value="GO_Central"/>
</dbReference>
<dbReference type="InterPro" id="IPR004979">
    <property type="entry name" value="TF_AP2"/>
</dbReference>
<dbReference type="InterPro" id="IPR013854">
    <property type="entry name" value="TF_AP2_C"/>
</dbReference>
<dbReference type="PANTHER" id="PTHR10812">
    <property type="entry name" value="TRANSCRIPTION FACTOR AP-2"/>
    <property type="match status" value="1"/>
</dbReference>
<dbReference type="PANTHER" id="PTHR10812:SF16">
    <property type="entry name" value="TRANSCRIPTION FACTOR AP-2 C-TERMINAL DOMAIN-CONTAINING PROTEIN-RELATED"/>
    <property type="match status" value="1"/>
</dbReference>
<dbReference type="Pfam" id="PF03299">
    <property type="entry name" value="TF_AP-2"/>
    <property type="match status" value="1"/>
</dbReference>
<evidence type="ECO:0000250" key="1">
    <source>
        <dbReference type="UniProtKB" id="P05549"/>
    </source>
</evidence>
<evidence type="ECO:0000256" key="2">
    <source>
        <dbReference type="SAM" id="MobiDB-lite"/>
    </source>
</evidence>
<evidence type="ECO:0000269" key="3">
    <source>
    </source>
</evidence>
<evidence type="ECO:0000303" key="4">
    <source>
    </source>
</evidence>
<evidence type="ECO:0000305" key="5"/>
<evidence type="ECO:0000305" key="6">
    <source>
    </source>
</evidence>
<evidence type="ECO:0000312" key="7">
    <source>
        <dbReference type="Proteomes" id="UP000001940"/>
    </source>
</evidence>
<evidence type="ECO:0000312" key="8">
    <source>
        <dbReference type="WormBase" id="F28C6.1"/>
    </source>
</evidence>
<protein>
    <recommendedName>
        <fullName evidence="4">Transcription factor aptf-4</fullName>
    </recommendedName>
</protein>
<name>APTF4_CAEEL</name>